<reference key="1">
    <citation type="journal article" date="2002" name="Nucleic Acids Res.">
        <title>Genome sequence of Oceanobacillus iheyensis isolated from the Iheya Ridge and its unexpected adaptive capabilities to extreme environments.</title>
        <authorList>
            <person name="Takami H."/>
            <person name="Takaki Y."/>
            <person name="Uchiyama I."/>
        </authorList>
    </citation>
    <scope>NUCLEOTIDE SEQUENCE [LARGE SCALE GENOMIC DNA]</scope>
    <source>
        <strain>DSM 14371 / CIP 107618 / JCM 11309 / KCTC 3954 / HTE831</strain>
    </source>
</reference>
<proteinExistence type="inferred from homology"/>
<comment type="subcellular location">
    <subcellularLocation>
        <location evidence="1">Cytoplasm</location>
    </subcellularLocation>
</comment>
<comment type="similarity">
    <text evidence="1">Belongs to the UPF0298 family.</text>
</comment>
<evidence type="ECO:0000255" key="1">
    <source>
        <dbReference type="HAMAP-Rule" id="MF_01126"/>
    </source>
</evidence>
<feature type="chain" id="PRO_0000074664" description="UPF0298 protein OB1449">
    <location>
        <begin position="1"/>
        <end position="91"/>
    </location>
</feature>
<dbReference type="EMBL" id="BA000028">
    <property type="protein sequence ID" value="BAC13405.1"/>
    <property type="molecule type" value="Genomic_DNA"/>
</dbReference>
<dbReference type="RefSeq" id="WP_011065850.1">
    <property type="nucleotide sequence ID" value="NC_004193.1"/>
</dbReference>
<dbReference type="SMR" id="Q8ER66"/>
<dbReference type="STRING" id="221109.gene:10733689"/>
<dbReference type="KEGG" id="oih:OB1449"/>
<dbReference type="eggNOG" id="COG4471">
    <property type="taxonomic scope" value="Bacteria"/>
</dbReference>
<dbReference type="HOGENOM" id="CLU_159890_2_0_9"/>
<dbReference type="OrthoDB" id="2990788at2"/>
<dbReference type="PhylomeDB" id="Q8ER66"/>
<dbReference type="Proteomes" id="UP000000822">
    <property type="component" value="Chromosome"/>
</dbReference>
<dbReference type="GO" id="GO:0005737">
    <property type="term" value="C:cytoplasm"/>
    <property type="evidence" value="ECO:0007669"/>
    <property type="project" value="UniProtKB-SubCell"/>
</dbReference>
<dbReference type="HAMAP" id="MF_01126">
    <property type="entry name" value="UPF0298"/>
    <property type="match status" value="1"/>
</dbReference>
<dbReference type="InterPro" id="IPR016979">
    <property type="entry name" value="DUF2129"/>
</dbReference>
<dbReference type="NCBIfam" id="NF002777">
    <property type="entry name" value="PRK02886.1"/>
    <property type="match status" value="1"/>
</dbReference>
<dbReference type="Pfam" id="PF09902">
    <property type="entry name" value="DUF2129"/>
    <property type="match status" value="1"/>
</dbReference>
<dbReference type="PIRSF" id="PIRSF031653">
    <property type="entry name" value="UCP031653"/>
    <property type="match status" value="1"/>
</dbReference>
<organism>
    <name type="scientific">Oceanobacillus iheyensis (strain DSM 14371 / CIP 107618 / JCM 11309 / KCTC 3954 / HTE831)</name>
    <dbReference type="NCBI Taxonomy" id="221109"/>
    <lineage>
        <taxon>Bacteria</taxon>
        <taxon>Bacillati</taxon>
        <taxon>Bacillota</taxon>
        <taxon>Bacilli</taxon>
        <taxon>Bacillales</taxon>
        <taxon>Bacillaceae</taxon>
        <taxon>Oceanobacillus</taxon>
    </lineage>
</organism>
<keyword id="KW-0963">Cytoplasm</keyword>
<keyword id="KW-1185">Reference proteome</keyword>
<protein>
    <recommendedName>
        <fullName evidence="1">UPF0298 protein OB1449</fullName>
    </recommendedName>
</protein>
<sequence length="91" mass="10957">MRVNRQGIIVWFQHMKNIKQLRKHGNVIYASKTKRYAVIYVNQDEMDDVELKIINYPFVSKVERSQKPFVRTDYENAKPDKAKQYDYKMGI</sequence>
<name>Y1449_OCEIH</name>
<accession>Q8ER66</accession>
<gene>
    <name type="ordered locus">OB1449</name>
</gene>